<protein>
    <recommendedName>
        <fullName>Sodium/potassium/calcium exchanger 5</fullName>
    </recommendedName>
    <alternativeName>
        <fullName>Na(+)/K(+)/Ca(2+)-exchange protein 5</fullName>
    </alternativeName>
    <alternativeName>
        <fullName>Solute carrier family 24 member 5</fullName>
    </alternativeName>
</protein>
<gene>
    <name evidence="7 12" type="primary">SLC24A5</name>
    <name evidence="8" type="synonym">JSX</name>
    <name type="synonym">NCKX5</name>
</gene>
<sequence>MQTKGGQTWARRALLLGILWATAHLPLSGTSLPQRLPRATGNSTQCVISPSSEFPEGFFTRQERRDGGIIIYFLIIVYMFMAISIVCDEYFLPSLEIISESLGLSQDVAGTTFMAAGSSAPELVTAFLGVFITKGDIGISTILGSAIYNLLGICAACGLLSNTVSTLSCWPLFRDCAAYTISAAAVLGIIYDNQVYWYEGALLLLIYGLYVLVLCFDIKINQYIIKKCSPCCACLAKAMERSEQQPLMGWEDEGQPFIRRQSRTDSGIFYEDSGYSQLSISLHGLSQVSEDPPSVFNMPEADLKRIFWVLSLPIITLLFLTTPDCRKKFWKNYFVITFFMSAIWISAFTYILVWMVTITGETLEIPDTVMGLTLLAAGTSIPDTIASVLVARKGKGDMAMSNIVGSNVFDMLCLGIPWFIKTAFINGSAPAEVNSRGLTYITISLNISIIFLFLAVHFNGWKLDRKLGIVCLLSYLGLATLSVLYELGIIGNNKIRGCGG</sequence>
<comment type="function">
    <text evidence="2 5">Calcium, potassium:sodium antiporter that transports 1 Ca(2+) and 1 K(+) to the melanosome in exchange for 4 cytoplasmic Na(+) (PubMed:18166528). Involved in pigmentation, possibly by participating in ion transport in melanosomes (PubMed:16357253, PubMed:18166528). Predominant sodium-calcium exchanger in melanocytes (PubMed:16357253, PubMed:18166528).</text>
</comment>
<comment type="catalytic activity">
    <reaction evidence="11">
        <text>Ca(2+)(out) + K(+)(out) + 4 Na(+)(in) = Ca(2+)(in) + K(+)(in) + 4 Na(+)(out)</text>
        <dbReference type="Rhea" id="RHEA:69967"/>
        <dbReference type="ChEBI" id="CHEBI:29101"/>
        <dbReference type="ChEBI" id="CHEBI:29103"/>
        <dbReference type="ChEBI" id="CHEBI:29108"/>
    </reaction>
</comment>
<comment type="interaction">
    <interactant intactId="EBI-12163679">
        <id>Q71RS6</id>
    </interactant>
    <interactant intactId="EBI-16439278">
        <id>Q6FHY5</id>
        <label>MEOX2</label>
    </interactant>
    <organismsDiffer>false</organismsDiffer>
    <experiments>3</experiments>
</comment>
<comment type="subcellular location">
    <subcellularLocation>
        <location evidence="5">Golgi apparatus</location>
        <location evidence="5">trans-Golgi network membrane</location>
        <topology evidence="1">Multi-pass membrane protein</topology>
    </subcellularLocation>
    <subcellularLocation>
        <location evidence="3">Melanosome</location>
    </subcellularLocation>
    <text evidence="3">Enriched in late-stage melanosomes.</text>
</comment>
<comment type="alternative products">
    <event type="alternative splicing"/>
    <isoform>
        <id>Q71RS6-1</id>
        <name>1</name>
        <sequence type="displayed"/>
    </isoform>
    <isoform>
        <id>Q71RS6-2</id>
        <name>2</name>
        <sequence type="described" ref="VSP_047596"/>
    </isoform>
</comment>
<comment type="polymorphism">
    <text evidence="4">Genetic variants in SLC24A5 define the skin/hair/eye pigmentation variation locus 4 (SHEP4) [MIM:113750]. Hair, eye and skin pigmentation are among the most visible examples of human phenotypic variation, with a broad normal range that is subject to substantial geographic stratification. In the case of skin, individuals tend to have lighter pigmentation with increasing distance from the equator. By contrast, the majority of variation in human eye and hair color is found among individuals of European ancestry, with most other human populations fixed for brown eyes and black hair.</text>
</comment>
<comment type="polymorphism">
    <text evidence="4">The Ala-111 allele predominates (93 to 100%) in African and East Asian populations. In contrast, the Thr-111 allele is nearly fixed (98.7 to 100%) in European populations, is associated with a substantial reduction in regional heterozygosity, and correlates with lighter skin pigmentation in admixed populations.</text>
</comment>
<comment type="disease" evidence="6">
    <disease id="DI-03840">
        <name>Albinism, oculocutaneous, 6</name>
        <acronym>OCA6</acronym>
        <description>A disorder characterized by a reduction or complete loss of melanin in the skin, hair and eyes. Patients show reduced or lacking pigmentation often accompanied by eye symptoms such as photophobia, strabismus, moderate to severe visual impairment, and nystagmus.</description>
        <dbReference type="MIM" id="113750"/>
    </disease>
    <text>The disease is caused by variants affecting the gene represented in this entry.</text>
</comment>
<comment type="similarity">
    <text evidence="10">Belongs to the Ca(2+):cation antiporter (CaCA) (TC 2.A.19) family. SLC24A subfamily.</text>
</comment>
<comment type="online information" name="Protein Spotlight">
    <link uri="https://www.proteinspotlight.org/back_issues/074"/>
    <text>Skin-deep - Issue 74 of September 2006</text>
</comment>
<name>NCKX5_HUMAN</name>
<feature type="signal peptide" evidence="1">
    <location>
        <begin position="1"/>
        <end position="29"/>
    </location>
</feature>
<feature type="chain" id="PRO_0000045753" description="Sodium/potassium/calcium exchanger 5">
    <location>
        <begin position="30"/>
        <end position="500"/>
    </location>
</feature>
<feature type="topological domain" description="Extracellular" evidence="1">
    <location>
        <begin position="30"/>
        <end position="66"/>
    </location>
</feature>
<feature type="transmembrane region" description="Helical; Name=1" evidence="1">
    <location>
        <begin position="67"/>
        <end position="87"/>
    </location>
</feature>
<feature type="topological domain" description="Cytoplasmic" evidence="1">
    <location>
        <begin position="88"/>
        <end position="111"/>
    </location>
</feature>
<feature type="transmembrane region" description="Helical; Name=2" evidence="1">
    <location>
        <begin position="112"/>
        <end position="132"/>
    </location>
</feature>
<feature type="topological domain" description="Extracellular" evidence="1">
    <location>
        <begin position="133"/>
        <end position="136"/>
    </location>
</feature>
<feature type="transmembrane region" description="Helical; Name=3" evidence="1">
    <location>
        <begin position="137"/>
        <end position="157"/>
    </location>
</feature>
<feature type="topological domain" description="Cytoplasmic" evidence="1">
    <location>
        <begin position="158"/>
        <end position="169"/>
    </location>
</feature>
<feature type="transmembrane region" description="Helical; Name=4" evidence="1">
    <location>
        <begin position="170"/>
        <end position="190"/>
    </location>
</feature>
<feature type="topological domain" description="Extracellular" evidence="1">
    <location>
        <begin position="191"/>
        <end position="195"/>
    </location>
</feature>
<feature type="transmembrane region" description="Helical; Name=5" evidence="1">
    <location>
        <begin position="196"/>
        <end position="216"/>
    </location>
</feature>
<feature type="topological domain" description="Cytoplasmic" evidence="1">
    <location>
        <begin position="217"/>
        <end position="302"/>
    </location>
</feature>
<feature type="transmembrane region" description="Helical; Name=6" evidence="1">
    <location>
        <begin position="303"/>
        <end position="323"/>
    </location>
</feature>
<feature type="topological domain" description="Extracellular" evidence="1">
    <location>
        <begin position="324"/>
        <end position="333"/>
    </location>
</feature>
<feature type="transmembrane region" description="Helical; Name=7" evidence="1">
    <location>
        <begin position="334"/>
        <end position="354"/>
    </location>
</feature>
<feature type="topological domain" description="Cytoplasmic" evidence="1">
    <location>
        <begin position="355"/>
        <end position="368"/>
    </location>
</feature>
<feature type="transmembrane region" description="Helical; Name=8" evidence="1">
    <location>
        <begin position="369"/>
        <end position="389"/>
    </location>
</feature>
<feature type="topological domain" description="Extracellular" evidence="1">
    <location>
        <begin position="390"/>
        <end position="399"/>
    </location>
</feature>
<feature type="transmembrane region" description="Helical; Name=9" evidence="1">
    <location>
        <begin position="400"/>
        <end position="420"/>
    </location>
</feature>
<feature type="topological domain" description="Cytoplasmic" evidence="1">
    <location>
        <begin position="421"/>
        <end position="437"/>
    </location>
</feature>
<feature type="transmembrane region" description="Helical; Name=10" evidence="1">
    <location>
        <begin position="438"/>
        <end position="458"/>
    </location>
</feature>
<feature type="topological domain" description="Extracellular" evidence="1">
    <location>
        <begin position="459"/>
        <end position="468"/>
    </location>
</feature>
<feature type="transmembrane region" description="Helical; Name=11" evidence="1">
    <location>
        <begin position="469"/>
        <end position="489"/>
    </location>
</feature>
<feature type="topological domain" description="Cytoplasmic" evidence="1">
    <location>
        <begin position="490"/>
        <end position="500"/>
    </location>
</feature>
<feature type="splice variant" id="VSP_047596" description="In isoform 2." evidence="9">
    <original>GNSTQCVISPSSEFPEGFFTRQERRDGGIIIYFLIIVYMFMAISIVCDEYFLPSLEIISES</original>
    <variation>A</variation>
    <location>
        <begin position="41"/>
        <end position="101"/>
    </location>
</feature>
<feature type="sequence variant" id="VAR_024922" description="Greatly reduced exchange activity; dbSNP:rs1426654." evidence="2 4 5">
    <original>T</original>
    <variation>A</variation>
    <location>
        <position position="111"/>
    </location>
</feature>
<organism>
    <name type="scientific">Homo sapiens</name>
    <name type="common">Human</name>
    <dbReference type="NCBI Taxonomy" id="9606"/>
    <lineage>
        <taxon>Eukaryota</taxon>
        <taxon>Metazoa</taxon>
        <taxon>Chordata</taxon>
        <taxon>Craniata</taxon>
        <taxon>Vertebrata</taxon>
        <taxon>Euteleostomi</taxon>
        <taxon>Mammalia</taxon>
        <taxon>Eutheria</taxon>
        <taxon>Euarchontoglires</taxon>
        <taxon>Primates</taxon>
        <taxon>Haplorrhini</taxon>
        <taxon>Catarrhini</taxon>
        <taxon>Hominidae</taxon>
        <taxon>Homo</taxon>
    </lineage>
</organism>
<dbReference type="EMBL" id="AF348468">
    <property type="protein sequence ID" value="AAQ15116.1"/>
    <property type="molecule type" value="mRNA"/>
</dbReference>
<dbReference type="EMBL" id="DQ665306">
    <property type="protein sequence ID" value="ABG66958.1"/>
    <property type="molecule type" value="mRNA"/>
</dbReference>
<dbReference type="EMBL" id="DQ665307">
    <property type="protein sequence ID" value="ABG66959.1"/>
    <property type="molecule type" value="mRNA"/>
</dbReference>
<dbReference type="EMBL" id="AC090526">
    <property type="status" value="NOT_ANNOTATED_CDS"/>
    <property type="molecule type" value="Genomic_DNA"/>
</dbReference>
<dbReference type="EMBL" id="BC073944">
    <property type="protein sequence ID" value="AAH73944.1"/>
    <property type="molecule type" value="mRNA"/>
</dbReference>
<dbReference type="EMBL" id="BC113628">
    <property type="protein sequence ID" value="AAI13629.1"/>
    <property type="molecule type" value="mRNA"/>
</dbReference>
<dbReference type="EMBL" id="BC113630">
    <property type="protein sequence ID" value="AAI13631.1"/>
    <property type="molecule type" value="mRNA"/>
</dbReference>
<dbReference type="EMBL" id="BC143950">
    <property type="protein sequence ID" value="AAI43951.1"/>
    <property type="molecule type" value="mRNA"/>
</dbReference>
<dbReference type="CCDS" id="CCDS10128.1">
    <molecule id="Q71RS6-1"/>
</dbReference>
<dbReference type="RefSeq" id="NP_995322.1">
    <molecule id="Q71RS6-1"/>
    <property type="nucleotide sequence ID" value="NM_205850.3"/>
</dbReference>
<dbReference type="BioGRID" id="129632">
    <property type="interactions" value="4"/>
</dbReference>
<dbReference type="FunCoup" id="Q71RS6">
    <property type="interactions" value="5"/>
</dbReference>
<dbReference type="IntAct" id="Q71RS6">
    <property type="interactions" value="4"/>
</dbReference>
<dbReference type="STRING" id="9606.ENSP00000341550"/>
<dbReference type="TCDB" id="2.A.19.4.6">
    <property type="family name" value="the ca(2+):cation antiporter (caca) family"/>
</dbReference>
<dbReference type="iPTMnet" id="Q71RS6"/>
<dbReference type="PhosphoSitePlus" id="Q71RS6"/>
<dbReference type="BioMuta" id="SLC24A5"/>
<dbReference type="DMDM" id="74749781"/>
<dbReference type="MassIVE" id="Q71RS6"/>
<dbReference type="PaxDb" id="9606-ENSP00000341550"/>
<dbReference type="PeptideAtlas" id="Q71RS6"/>
<dbReference type="ProteomicsDB" id="68623">
    <molecule id="Q71RS6-1"/>
</dbReference>
<dbReference type="ProteomicsDB" id="754"/>
<dbReference type="Antibodypedia" id="24489">
    <property type="antibodies" value="94 antibodies from 27 providers"/>
</dbReference>
<dbReference type="DNASU" id="283652"/>
<dbReference type="Ensembl" id="ENST00000341459.8">
    <molecule id="Q71RS6-1"/>
    <property type="protein sequence ID" value="ENSP00000341550.3"/>
    <property type="gene ID" value="ENSG00000188467.11"/>
</dbReference>
<dbReference type="Ensembl" id="ENST00000449382.2">
    <molecule id="Q71RS6-2"/>
    <property type="protein sequence ID" value="ENSP00000389966.2"/>
    <property type="gene ID" value="ENSG00000188467.11"/>
</dbReference>
<dbReference type="GeneID" id="283652"/>
<dbReference type="KEGG" id="hsa:283652"/>
<dbReference type="MANE-Select" id="ENST00000341459.8">
    <property type="protein sequence ID" value="ENSP00000341550.3"/>
    <property type="RefSeq nucleotide sequence ID" value="NM_205850.3"/>
    <property type="RefSeq protein sequence ID" value="NP_995322.1"/>
</dbReference>
<dbReference type="UCSC" id="uc001zwe.4">
    <molecule id="Q71RS6-1"/>
    <property type="organism name" value="human"/>
</dbReference>
<dbReference type="AGR" id="HGNC:20611"/>
<dbReference type="CTD" id="283652"/>
<dbReference type="DisGeNET" id="283652"/>
<dbReference type="GeneCards" id="SLC24A5"/>
<dbReference type="HGNC" id="HGNC:20611">
    <property type="gene designation" value="SLC24A5"/>
</dbReference>
<dbReference type="HPA" id="ENSG00000188467">
    <property type="expression patterns" value="Tissue enriched (skin)"/>
</dbReference>
<dbReference type="MalaCards" id="SLC24A5"/>
<dbReference type="MIM" id="113750">
    <property type="type" value="phenotype"/>
</dbReference>
<dbReference type="MIM" id="609802">
    <property type="type" value="gene"/>
</dbReference>
<dbReference type="neXtProt" id="NX_Q71RS6"/>
<dbReference type="OpenTargets" id="ENSG00000188467"/>
<dbReference type="Orphanet" id="370097">
    <property type="disease" value="Oculocutaneous albinism type 6"/>
</dbReference>
<dbReference type="PharmGKB" id="PA134868972"/>
<dbReference type="VEuPathDB" id="HostDB:ENSG00000188467"/>
<dbReference type="eggNOG" id="KOG1307">
    <property type="taxonomic scope" value="Eukaryota"/>
</dbReference>
<dbReference type="GeneTree" id="ENSGT01030000234532"/>
<dbReference type="HOGENOM" id="CLU_007948_5_0_1"/>
<dbReference type="InParanoid" id="Q71RS6"/>
<dbReference type="OMA" id="RLWAWIT"/>
<dbReference type="OrthoDB" id="2127281at2759"/>
<dbReference type="PAN-GO" id="Q71RS6">
    <property type="GO annotations" value="6 GO annotations based on evolutionary models"/>
</dbReference>
<dbReference type="PhylomeDB" id="Q71RS6"/>
<dbReference type="TreeFam" id="TF318759"/>
<dbReference type="PathwayCommons" id="Q71RS6"/>
<dbReference type="Reactome" id="R-HSA-425561">
    <property type="pathway name" value="Sodium/Calcium exchangers"/>
</dbReference>
<dbReference type="Reactome" id="R-HSA-5619036">
    <property type="pathway name" value="Defective SLC24A5 causes oculocutaneous albinism 6 (OCA6)"/>
</dbReference>
<dbReference type="SignaLink" id="Q71RS6"/>
<dbReference type="SIGNOR" id="Q71RS6"/>
<dbReference type="BioGRID-ORCS" id="283652">
    <property type="hits" value="11 hits in 1144 CRISPR screens"/>
</dbReference>
<dbReference type="ChiTaRS" id="SLC24A5">
    <property type="organism name" value="human"/>
</dbReference>
<dbReference type="GeneWiki" id="SLC24A5"/>
<dbReference type="GenomeRNAi" id="283652"/>
<dbReference type="Pharos" id="Q71RS6">
    <property type="development level" value="Tbio"/>
</dbReference>
<dbReference type="PRO" id="PR:Q71RS6"/>
<dbReference type="Proteomes" id="UP000005640">
    <property type="component" value="Chromosome 15"/>
</dbReference>
<dbReference type="RNAct" id="Q71RS6">
    <property type="molecule type" value="protein"/>
</dbReference>
<dbReference type="Bgee" id="ENSG00000188467">
    <property type="expression patterns" value="Expressed in male germ line stem cell (sensu Vertebrata) in testis and 48 other cell types or tissues"/>
</dbReference>
<dbReference type="ExpressionAtlas" id="Q71RS6">
    <property type="expression patterns" value="baseline and differential"/>
</dbReference>
<dbReference type="GO" id="GO:0042470">
    <property type="term" value="C:melanosome"/>
    <property type="evidence" value="ECO:0007669"/>
    <property type="project" value="UniProtKB-SubCell"/>
</dbReference>
<dbReference type="GO" id="GO:0005802">
    <property type="term" value="C:trans-Golgi network"/>
    <property type="evidence" value="ECO:0000314"/>
    <property type="project" value="MGI"/>
</dbReference>
<dbReference type="GO" id="GO:0032588">
    <property type="term" value="C:trans-Golgi network membrane"/>
    <property type="evidence" value="ECO:0000304"/>
    <property type="project" value="Reactome"/>
</dbReference>
<dbReference type="GO" id="GO:0005262">
    <property type="term" value="F:calcium channel activity"/>
    <property type="evidence" value="ECO:0000318"/>
    <property type="project" value="GO_Central"/>
</dbReference>
<dbReference type="GO" id="GO:0008273">
    <property type="term" value="F:calcium, potassium:sodium antiporter activity"/>
    <property type="evidence" value="ECO:0000314"/>
    <property type="project" value="MGI"/>
</dbReference>
<dbReference type="GO" id="GO:0015293">
    <property type="term" value="F:symporter activity"/>
    <property type="evidence" value="ECO:0007669"/>
    <property type="project" value="UniProtKB-KW"/>
</dbReference>
<dbReference type="GO" id="GO:0070509">
    <property type="term" value="P:calcium ion import"/>
    <property type="evidence" value="ECO:0000314"/>
    <property type="project" value="ARUK-UCL"/>
</dbReference>
<dbReference type="GO" id="GO:0070588">
    <property type="term" value="P:calcium ion transmembrane transport"/>
    <property type="evidence" value="ECO:0000318"/>
    <property type="project" value="GO_Central"/>
</dbReference>
<dbReference type="GO" id="GO:0006874">
    <property type="term" value="P:intracellular calcium ion homeostasis"/>
    <property type="evidence" value="ECO:0000318"/>
    <property type="project" value="GO_Central"/>
</dbReference>
<dbReference type="GO" id="GO:0042438">
    <property type="term" value="P:melanin biosynthetic process"/>
    <property type="evidence" value="ECO:0007669"/>
    <property type="project" value="Ensembl"/>
</dbReference>
<dbReference type="GO" id="GO:0034220">
    <property type="term" value="P:monoatomic ion transmembrane transport"/>
    <property type="evidence" value="ECO:0000314"/>
    <property type="project" value="MGI"/>
</dbReference>
<dbReference type="GO" id="GO:0006811">
    <property type="term" value="P:monoatomic ion transport"/>
    <property type="evidence" value="ECO:0000304"/>
    <property type="project" value="Reactome"/>
</dbReference>
<dbReference type="GO" id="GO:0048022">
    <property type="term" value="P:negative regulation of melanin biosynthetic process"/>
    <property type="evidence" value="ECO:0007669"/>
    <property type="project" value="Ensembl"/>
</dbReference>
<dbReference type="FunFam" id="1.20.1420.30:FF:000009">
    <property type="entry name" value="sodium/potassium/calcium exchanger 5 isoform X2"/>
    <property type="match status" value="1"/>
</dbReference>
<dbReference type="FunFam" id="1.20.1420.30:FF:000015">
    <property type="entry name" value="sodium/potassium/calcium exchanger 5 isoform X2"/>
    <property type="match status" value="1"/>
</dbReference>
<dbReference type="Gene3D" id="1.20.1420.30">
    <property type="entry name" value="NCX, central ion-binding region"/>
    <property type="match status" value="2"/>
</dbReference>
<dbReference type="InterPro" id="IPR004481">
    <property type="entry name" value="K/Na/Ca-exchanger"/>
</dbReference>
<dbReference type="InterPro" id="IPR004837">
    <property type="entry name" value="NaCa_Exmemb"/>
</dbReference>
<dbReference type="InterPro" id="IPR044880">
    <property type="entry name" value="NCX_ion-bd_dom_sf"/>
</dbReference>
<dbReference type="NCBIfam" id="TIGR00367">
    <property type="entry name" value="calcium/sodium antiporter"/>
    <property type="match status" value="1"/>
</dbReference>
<dbReference type="PANTHER" id="PTHR10846">
    <property type="entry name" value="SODIUM/POTASSIUM/CALCIUM EXCHANGER"/>
    <property type="match status" value="1"/>
</dbReference>
<dbReference type="PANTHER" id="PTHR10846:SF61">
    <property type="entry name" value="SODIUM_POTASSIUM_CALCIUM EXCHANGER 5"/>
    <property type="match status" value="1"/>
</dbReference>
<dbReference type="Pfam" id="PF01699">
    <property type="entry name" value="Na_Ca_ex"/>
    <property type="match status" value="2"/>
</dbReference>
<proteinExistence type="evidence at protein level"/>
<evidence type="ECO:0000255" key="1"/>
<evidence type="ECO:0000269" key="2">
    <source>
    </source>
</evidence>
<evidence type="ECO:0000269" key="3">
    <source>
    </source>
</evidence>
<evidence type="ECO:0000269" key="4">
    <source>
    </source>
</evidence>
<evidence type="ECO:0000269" key="5">
    <source>
    </source>
</evidence>
<evidence type="ECO:0000269" key="6">
    <source>
    </source>
</evidence>
<evidence type="ECO:0000303" key="7">
    <source>
    </source>
</evidence>
<evidence type="ECO:0000303" key="8">
    <source ref="1"/>
</evidence>
<evidence type="ECO:0000303" key="9">
    <source ref="3"/>
</evidence>
<evidence type="ECO:0000305" key="10"/>
<evidence type="ECO:0000305" key="11">
    <source>
    </source>
</evidence>
<evidence type="ECO:0000312" key="12">
    <source>
        <dbReference type="HGNC" id="HGNC:20611"/>
    </source>
</evidence>
<keyword id="KW-0015">Albinism</keyword>
<keyword id="KW-0025">Alternative splicing</keyword>
<keyword id="KW-0050">Antiport</keyword>
<keyword id="KW-0106">Calcium</keyword>
<keyword id="KW-0109">Calcium transport</keyword>
<keyword id="KW-0333">Golgi apparatus</keyword>
<keyword id="KW-0406">Ion transport</keyword>
<keyword id="KW-0472">Membrane</keyword>
<keyword id="KW-0630">Potassium</keyword>
<keyword id="KW-0633">Potassium transport</keyword>
<keyword id="KW-1267">Proteomics identification</keyword>
<keyword id="KW-1185">Reference proteome</keyword>
<keyword id="KW-0716">Sensory transduction</keyword>
<keyword id="KW-0732">Signal</keyword>
<keyword id="KW-0915">Sodium</keyword>
<keyword id="KW-0739">Sodium transport</keyword>
<keyword id="KW-0769">Symport</keyword>
<keyword id="KW-0812">Transmembrane</keyword>
<keyword id="KW-1133">Transmembrane helix</keyword>
<keyword id="KW-0813">Transport</keyword>
<accession>Q71RS6</accession>
<accession>A5X8Z8</accession>
<accession>A5X8Z9</accession>
<accession>Q14CT4</accession>
<accession>Q6DKH3</accession>
<reference key="1">
    <citation type="submission" date="2001-02" db="EMBL/GenBank/DDBJ databases">
        <title>Cloning and characterization of a novel, renal divalent cation transporter (JSX).</title>
        <authorList>
            <person name="Satoh J."/>
            <person name="Romero M.F."/>
        </authorList>
    </citation>
    <scope>NUCLEOTIDE SEQUENCE [MRNA] (ISOFORM 1)</scope>
    <source>
        <tissue>Kidney</tissue>
    </source>
</reference>
<reference key="2">
    <citation type="submission" date="2006-05" db="EMBL/GenBank/DDBJ databases">
        <title>Cloning and characterization of a K-dependent, Na-Ca2+ exchanger, member 5 (slc24A5) expressed in human retinal pigment epithelium.</title>
        <authorList>
            <person name="Mangini N.J."/>
            <person name="Kennedy B.G."/>
            <person name="Canfield V.A."/>
            <person name="Cheng K.C."/>
        </authorList>
    </citation>
    <scope>NUCLEOTIDE SEQUENCE [MRNA] (ISOFORM 1)</scope>
    <source>
        <tissue>Retinal pigment epithelium</tissue>
    </source>
</reference>
<reference key="3">
    <citation type="submission" date="2006-06" db="EMBL/GenBank/DDBJ databases">
        <title>Molecular cloning of a splice variant of SLC24A5 from human retinal pigment epithelium.</title>
        <authorList>
            <person name="Mangini N.J."/>
            <person name="Kennedy B.G."/>
            <person name="Canfield V.A."/>
            <person name="Cheng K.C."/>
        </authorList>
    </citation>
    <scope>NUCLEOTIDE SEQUENCE [MRNA] (ISOFORM 2)</scope>
    <source>
        <tissue>Retinal pigment epithelium</tissue>
    </source>
</reference>
<reference key="4">
    <citation type="journal article" date="2006" name="Nature">
        <title>Analysis of the DNA sequence and duplication history of human chromosome 15.</title>
        <authorList>
            <person name="Zody M.C."/>
            <person name="Garber M."/>
            <person name="Sharpe T."/>
            <person name="Young S.K."/>
            <person name="Rowen L."/>
            <person name="O'Neill K."/>
            <person name="Whittaker C.A."/>
            <person name="Kamal M."/>
            <person name="Chang J.L."/>
            <person name="Cuomo C.A."/>
            <person name="Dewar K."/>
            <person name="FitzGerald M.G."/>
            <person name="Kodira C.D."/>
            <person name="Madan A."/>
            <person name="Qin S."/>
            <person name="Yang X."/>
            <person name="Abbasi N."/>
            <person name="Abouelleil A."/>
            <person name="Arachchi H.M."/>
            <person name="Baradarani L."/>
            <person name="Birditt B."/>
            <person name="Bloom S."/>
            <person name="Bloom T."/>
            <person name="Borowsky M.L."/>
            <person name="Burke J."/>
            <person name="Butler J."/>
            <person name="Cook A."/>
            <person name="DeArellano K."/>
            <person name="DeCaprio D."/>
            <person name="Dorris L. III"/>
            <person name="Dors M."/>
            <person name="Eichler E.E."/>
            <person name="Engels R."/>
            <person name="Fahey J."/>
            <person name="Fleetwood P."/>
            <person name="Friedman C."/>
            <person name="Gearin G."/>
            <person name="Hall J.L."/>
            <person name="Hensley G."/>
            <person name="Johnson E."/>
            <person name="Jones C."/>
            <person name="Kamat A."/>
            <person name="Kaur A."/>
            <person name="Locke D.P."/>
            <person name="Madan A."/>
            <person name="Munson G."/>
            <person name="Jaffe D.B."/>
            <person name="Lui A."/>
            <person name="Macdonald P."/>
            <person name="Mauceli E."/>
            <person name="Naylor J.W."/>
            <person name="Nesbitt R."/>
            <person name="Nicol R."/>
            <person name="O'Leary S.B."/>
            <person name="Ratcliffe A."/>
            <person name="Rounsley S."/>
            <person name="She X."/>
            <person name="Sneddon K.M.B."/>
            <person name="Stewart S."/>
            <person name="Sougnez C."/>
            <person name="Stone S.M."/>
            <person name="Topham K."/>
            <person name="Vincent D."/>
            <person name="Wang S."/>
            <person name="Zimmer A.R."/>
            <person name="Birren B.W."/>
            <person name="Hood L."/>
            <person name="Lander E.S."/>
            <person name="Nusbaum C."/>
        </authorList>
    </citation>
    <scope>NUCLEOTIDE SEQUENCE [LARGE SCALE GENOMIC DNA]</scope>
</reference>
<reference key="5">
    <citation type="journal article" date="2004" name="Genome Res.">
        <title>The status, quality, and expansion of the NIH full-length cDNA project: the Mammalian Gene Collection (MGC).</title>
        <authorList>
            <consortium name="The MGC Project Team"/>
        </authorList>
    </citation>
    <scope>NUCLEOTIDE SEQUENCE [LARGE SCALE MRNA] (ISOFORM 1)</scope>
    <source>
        <tissue>Brain</tissue>
        <tissue>Mammary gland</tissue>
    </source>
</reference>
<reference key="6">
    <citation type="journal article" date="2005" name="Science">
        <title>SLC24A5, a putative cation exchanger, affects pigmentation in zebrafish and humans.</title>
        <authorList>
            <person name="Lamason R.L."/>
            <person name="Mohideen M.-A.P.K."/>
            <person name="Mest J.R."/>
            <person name="Wong A.C."/>
            <person name="Norton H.L."/>
            <person name="Aros M.C."/>
            <person name="Jurynec M.J."/>
            <person name="Mao X."/>
            <person name="Humphreville V.R."/>
            <person name="Humbert J.E."/>
            <person name="Sinha S."/>
            <person name="Moore J.L."/>
            <person name="Jagadeeswaran P."/>
            <person name="Zhao W."/>
            <person name="Ning G."/>
            <person name="Makalowska I."/>
            <person name="McKeigue P.M."/>
            <person name="O'Donnell D."/>
            <person name="Kittles R."/>
            <person name="Parra E.J."/>
            <person name="Mangini N.J."/>
            <person name="Grunwald D.J."/>
            <person name="Shriver M.D."/>
            <person name="Canfield V.A."/>
            <person name="Cheng K.C."/>
        </authorList>
    </citation>
    <scope>FUNCTION</scope>
    <scope>VARIANT ALA-111</scope>
</reference>
<reference key="7">
    <citation type="journal article" date="2006" name="J. Proteome Res.">
        <title>Proteomic and bioinformatic characterization of the biogenesis and function of melanosomes.</title>
        <authorList>
            <person name="Chi A."/>
            <person name="Valencia J.C."/>
            <person name="Hu Z.-Z."/>
            <person name="Watabe H."/>
            <person name="Yamaguchi H."/>
            <person name="Mangini N.J."/>
            <person name="Huang H."/>
            <person name="Canfield V.A."/>
            <person name="Cheng K.C."/>
            <person name="Yang F."/>
            <person name="Abe R."/>
            <person name="Yamagishi S."/>
            <person name="Shabanowitz J."/>
            <person name="Hearing V.J."/>
            <person name="Wu C."/>
            <person name="Appella E."/>
            <person name="Hunt D.F."/>
        </authorList>
    </citation>
    <scope>SUBCELLULAR LOCATION [LARGE SCALE ANALYSIS]</scope>
    <source>
        <tissue>Melanoma</tissue>
    </source>
</reference>
<reference key="8">
    <citation type="journal article" date="2008" name="J. Biol. Chem.">
        <title>SLC24A5 encodes a trans-Golgi network protein with potassium-dependent sodium-calcium exchange activity that regulates human epidermal melanogenesis.</title>
        <authorList>
            <person name="Ginger R.S."/>
            <person name="Askew S.E."/>
            <person name="Ogborne R.M."/>
            <person name="Wilson S."/>
            <person name="Ferdinando D."/>
            <person name="Dadd T."/>
            <person name="Smith A.M."/>
            <person name="Kazi S."/>
            <person name="Szerencsei R.T."/>
            <person name="Winkfein R.J."/>
            <person name="Schnetkamp P.P."/>
            <person name="Green M.R."/>
        </authorList>
    </citation>
    <scope>FUNCTION</scope>
    <scope>TRANSPORTER ACTIVITY</scope>
    <scope>SUBCELLULAR LOCATION</scope>
    <scope>CHARACTERIZATION OF VARIANT ALA-111</scope>
</reference>
<reference key="9">
    <citation type="journal article" date="2013" name="J. Invest. Dermatol.">
        <title>Exome sequencing identifies SLC24A5 as a candidate gene for nonsyndromic oculocutaneous albinism.</title>
        <authorList>
            <person name="Wei A.H."/>
            <person name="Zang D.J."/>
            <person name="Zhang Z."/>
            <person name="Liu X.Z."/>
            <person name="He X."/>
            <person name="Yang L."/>
            <person name="Wang Y."/>
            <person name="Zhou Z.Y."/>
            <person name="Zhang M.R."/>
            <person name="Dai L.L."/>
            <person name="Yang X.M."/>
            <person name="Li W."/>
        </authorList>
    </citation>
    <scope>INVOLVEMENT IN OCA6</scope>
</reference>
<reference key="10">
    <citation type="journal article" date="2007" name="Am. J. Hum. Genet.">
        <title>A genomewide association study of skin pigmentation in a South Asian population.</title>
        <authorList>
            <person name="Stokowski R.P."/>
            <person name="Pant P.V.K."/>
            <person name="Dadd T."/>
            <person name="Fereday A."/>
            <person name="Hinds D.A."/>
            <person name="Jarman C."/>
            <person name="Filsell W."/>
            <person name="Ginger R.S."/>
            <person name="Green M.R."/>
            <person name="van der Ouderaa F.J."/>
            <person name="Cox D.R."/>
        </authorList>
    </citation>
    <scope>VARIANT ALA-111</scope>
    <scope>INVOLVEMENT IN SHEP4</scope>
    <scope>POLYMORPHISM</scope>
</reference>